<organism>
    <name type="scientific">Escherichia coli O6:H1 (strain CFT073 / ATCC 700928 / UPEC)</name>
    <dbReference type="NCBI Taxonomy" id="199310"/>
    <lineage>
        <taxon>Bacteria</taxon>
        <taxon>Pseudomonadati</taxon>
        <taxon>Pseudomonadota</taxon>
        <taxon>Gammaproteobacteria</taxon>
        <taxon>Enterobacterales</taxon>
        <taxon>Enterobacteriaceae</taxon>
        <taxon>Escherichia</taxon>
    </lineage>
</organism>
<protein>
    <recommendedName>
        <fullName>Biopolymer transport protein ExbD</fullName>
    </recommendedName>
</protein>
<accession>P0ABV3</accession>
<accession>P18784</accession>
<reference key="1">
    <citation type="journal article" date="2002" name="Proc. Natl. Acad. Sci. U.S.A.">
        <title>Extensive mosaic structure revealed by the complete genome sequence of uropathogenic Escherichia coli.</title>
        <authorList>
            <person name="Welch R.A."/>
            <person name="Burland V."/>
            <person name="Plunkett G. III"/>
            <person name="Redford P."/>
            <person name="Roesch P."/>
            <person name="Rasko D."/>
            <person name="Buckles E.L."/>
            <person name="Liou S.-R."/>
            <person name="Boutin A."/>
            <person name="Hackett J."/>
            <person name="Stroud D."/>
            <person name="Mayhew G.F."/>
            <person name="Rose D.J."/>
            <person name="Zhou S."/>
            <person name="Schwartz D.C."/>
            <person name="Perna N.T."/>
            <person name="Mobley H.L.T."/>
            <person name="Donnenberg M.S."/>
            <person name="Blattner F.R."/>
        </authorList>
    </citation>
    <scope>NUCLEOTIDE SEQUENCE [LARGE SCALE GENOMIC DNA]</scope>
    <source>
        <strain>CFT073 / ATCC 700928 / UPEC</strain>
    </source>
</reference>
<evidence type="ECO:0000250" key="1"/>
<evidence type="ECO:0000305" key="2"/>
<gene>
    <name type="primary">exbD</name>
    <name type="ordered locus">c3740</name>
</gene>
<sequence length="141" mass="15527">MAMHLNENLDDNGEMHDINVTPFIDVMLVLLIIFMVAAPLATVDVKVNLPASTSTPQPRPEKPVYLSVKADNSMFIGNDPVTDETMITALNALTEGKKDTTIFFRADKTVDYETLMKVMDTLHQAGYLKIGLVGEETAKAK</sequence>
<proteinExistence type="inferred from homology"/>
<comment type="function">
    <text evidence="1">Involved in the TonB-dependent energy-dependent transport of various receptor-bound substrates.</text>
</comment>
<comment type="subunit">
    <text evidence="1">The accessory proteins ExbB and ExbD seem to form a complex with TonB.</text>
</comment>
<comment type="subcellular location">
    <subcellularLocation>
        <location evidence="1">Cell inner membrane</location>
        <topology evidence="1">Single-pass type II membrane protein</topology>
    </subcellularLocation>
</comment>
<comment type="similarity">
    <text evidence="2">Belongs to the ExbD/TolR family.</text>
</comment>
<feature type="chain" id="PRO_0000129119" description="Biopolymer transport protein ExbD">
    <location>
        <begin position="1"/>
        <end position="141"/>
    </location>
</feature>
<feature type="topological domain" description="Cytoplasmic" evidence="2">
    <location>
        <begin position="1"/>
        <end position="22"/>
    </location>
</feature>
<feature type="transmembrane region" description="Helical; Signal-anchor for type II membrane protein" evidence="2">
    <location>
        <begin position="23"/>
        <end position="43"/>
    </location>
</feature>
<feature type="topological domain" description="Periplasmic" evidence="2">
    <location>
        <begin position="44"/>
        <end position="141"/>
    </location>
</feature>
<name>EXBD_ECOL6</name>
<keyword id="KW-0080">Bacteriocin transport</keyword>
<keyword id="KW-0997">Cell inner membrane</keyword>
<keyword id="KW-1003">Cell membrane</keyword>
<keyword id="KW-0472">Membrane</keyword>
<keyword id="KW-0653">Protein transport</keyword>
<keyword id="KW-1185">Reference proteome</keyword>
<keyword id="KW-0735">Signal-anchor</keyword>
<keyword id="KW-0812">Transmembrane</keyword>
<keyword id="KW-1133">Transmembrane helix</keyword>
<keyword id="KW-0813">Transport</keyword>
<dbReference type="EMBL" id="AE014075">
    <property type="protein sequence ID" value="AAN82184.1"/>
    <property type="molecule type" value="Genomic_DNA"/>
</dbReference>
<dbReference type="RefSeq" id="WP_001240712.1">
    <property type="nucleotide sequence ID" value="NZ_CP051263.1"/>
</dbReference>
<dbReference type="BMRB" id="P0ABV3"/>
<dbReference type="SMR" id="P0ABV3"/>
<dbReference type="STRING" id="199310.c3740"/>
<dbReference type="GeneID" id="93778982"/>
<dbReference type="KEGG" id="ecc:c3740"/>
<dbReference type="eggNOG" id="COG0848">
    <property type="taxonomic scope" value="Bacteria"/>
</dbReference>
<dbReference type="HOGENOM" id="CLU_085305_1_3_6"/>
<dbReference type="BioCyc" id="ECOL199310:C3740-MONOMER"/>
<dbReference type="Proteomes" id="UP000001410">
    <property type="component" value="Chromosome"/>
</dbReference>
<dbReference type="GO" id="GO:0005886">
    <property type="term" value="C:plasma membrane"/>
    <property type="evidence" value="ECO:0007669"/>
    <property type="project" value="UniProtKB-SubCell"/>
</dbReference>
<dbReference type="GO" id="GO:0022857">
    <property type="term" value="F:transmembrane transporter activity"/>
    <property type="evidence" value="ECO:0007669"/>
    <property type="project" value="InterPro"/>
</dbReference>
<dbReference type="GO" id="GO:0043213">
    <property type="term" value="P:bacteriocin transport"/>
    <property type="evidence" value="ECO:0007669"/>
    <property type="project" value="UniProtKB-KW"/>
</dbReference>
<dbReference type="GO" id="GO:0015031">
    <property type="term" value="P:protein transport"/>
    <property type="evidence" value="ECO:0007669"/>
    <property type="project" value="UniProtKB-KW"/>
</dbReference>
<dbReference type="FunFam" id="3.30.420.270:FF:000002">
    <property type="entry name" value="TonB system transport protein ExbD"/>
    <property type="match status" value="1"/>
</dbReference>
<dbReference type="Gene3D" id="3.30.420.270">
    <property type="match status" value="1"/>
</dbReference>
<dbReference type="InterPro" id="IPR003400">
    <property type="entry name" value="ExbD"/>
</dbReference>
<dbReference type="InterPro" id="IPR014170">
    <property type="entry name" value="TonB_ExbD_1"/>
</dbReference>
<dbReference type="NCBIfam" id="TIGR02803">
    <property type="entry name" value="ExbD_1"/>
    <property type="match status" value="1"/>
</dbReference>
<dbReference type="NCBIfam" id="NF008429">
    <property type="entry name" value="PRK11267.1"/>
    <property type="match status" value="1"/>
</dbReference>
<dbReference type="PANTHER" id="PTHR30558:SF9">
    <property type="entry name" value="BIOPOLYMER TRANSPORT PROTEIN EXBD"/>
    <property type="match status" value="1"/>
</dbReference>
<dbReference type="PANTHER" id="PTHR30558">
    <property type="entry name" value="EXBD MEMBRANE COMPONENT OF PMF-DRIVEN MACROMOLECULE IMPORT SYSTEM"/>
    <property type="match status" value="1"/>
</dbReference>
<dbReference type="Pfam" id="PF02472">
    <property type="entry name" value="ExbD"/>
    <property type="match status" value="1"/>
</dbReference>